<gene>
    <name evidence="10" type="primary">AacuB</name>
    <name type="ORF">ASPACDRAFT_33567</name>
</gene>
<name>AACUB_ASPA1</name>
<accession>A0A1L9WLF2</accession>
<dbReference type="EMBL" id="KV878984">
    <property type="protein sequence ID" value="OJJ96982.1"/>
    <property type="molecule type" value="Genomic_DNA"/>
</dbReference>
<dbReference type="RefSeq" id="XP_020053322.1">
    <property type="nucleotide sequence ID" value="XM_020199966.1"/>
</dbReference>
<dbReference type="STRING" id="690307.A0A1L9WLF2"/>
<dbReference type="GeneID" id="30973780"/>
<dbReference type="VEuPathDB" id="FungiDB:ASPACDRAFT_33567"/>
<dbReference type="OMA" id="QAWEVMS"/>
<dbReference type="OrthoDB" id="2269373at2759"/>
<dbReference type="Proteomes" id="UP000184546">
    <property type="component" value="Unassembled WGS sequence"/>
</dbReference>
<dbReference type="GO" id="GO:0005634">
    <property type="term" value="C:nucleus"/>
    <property type="evidence" value="ECO:0007669"/>
    <property type="project" value="UniProtKB-SubCell"/>
</dbReference>
<dbReference type="GO" id="GO:0003677">
    <property type="term" value="F:DNA binding"/>
    <property type="evidence" value="ECO:0007669"/>
    <property type="project" value="UniProtKB-KW"/>
</dbReference>
<dbReference type="GO" id="GO:0000981">
    <property type="term" value="F:DNA-binding transcription factor activity, RNA polymerase II-specific"/>
    <property type="evidence" value="ECO:0007669"/>
    <property type="project" value="InterPro"/>
</dbReference>
<dbReference type="GO" id="GO:0008270">
    <property type="term" value="F:zinc ion binding"/>
    <property type="evidence" value="ECO:0007669"/>
    <property type="project" value="InterPro"/>
</dbReference>
<dbReference type="GO" id="GO:0006351">
    <property type="term" value="P:DNA-templated transcription"/>
    <property type="evidence" value="ECO:0007669"/>
    <property type="project" value="InterPro"/>
</dbReference>
<dbReference type="GO" id="GO:0009893">
    <property type="term" value="P:positive regulation of metabolic process"/>
    <property type="evidence" value="ECO:0007669"/>
    <property type="project" value="UniProtKB-ARBA"/>
</dbReference>
<dbReference type="CDD" id="cd12148">
    <property type="entry name" value="fungal_TF_MHR"/>
    <property type="match status" value="1"/>
</dbReference>
<dbReference type="CDD" id="cd00067">
    <property type="entry name" value="GAL4"/>
    <property type="match status" value="1"/>
</dbReference>
<dbReference type="Gene3D" id="4.10.240.10">
    <property type="entry name" value="Zn(2)-C6 fungal-type DNA-binding domain"/>
    <property type="match status" value="1"/>
</dbReference>
<dbReference type="InterPro" id="IPR050613">
    <property type="entry name" value="Sec_Metabolite_Reg"/>
</dbReference>
<dbReference type="InterPro" id="IPR007219">
    <property type="entry name" value="Transcription_factor_dom_fun"/>
</dbReference>
<dbReference type="InterPro" id="IPR036864">
    <property type="entry name" value="Zn2-C6_fun-type_DNA-bd_sf"/>
</dbReference>
<dbReference type="InterPro" id="IPR001138">
    <property type="entry name" value="Zn2Cys6_DnaBD"/>
</dbReference>
<dbReference type="PANTHER" id="PTHR31001">
    <property type="entry name" value="UNCHARACTERIZED TRANSCRIPTIONAL REGULATORY PROTEIN"/>
    <property type="match status" value="1"/>
</dbReference>
<dbReference type="PANTHER" id="PTHR31001:SF45">
    <property type="entry name" value="ZN(II)2CYS6 TRANSCRIPTION FACTOR (EUROFUNG)"/>
    <property type="match status" value="1"/>
</dbReference>
<dbReference type="Pfam" id="PF04082">
    <property type="entry name" value="Fungal_trans"/>
    <property type="match status" value="1"/>
</dbReference>
<dbReference type="Pfam" id="PF00172">
    <property type="entry name" value="Zn_clus"/>
    <property type="match status" value="1"/>
</dbReference>
<dbReference type="SMART" id="SM00906">
    <property type="entry name" value="Fungal_trans"/>
    <property type="match status" value="1"/>
</dbReference>
<dbReference type="SMART" id="SM00066">
    <property type="entry name" value="GAL4"/>
    <property type="match status" value="1"/>
</dbReference>
<dbReference type="SUPFAM" id="SSF57701">
    <property type="entry name" value="Zn2/Cys6 DNA-binding domain"/>
    <property type="match status" value="1"/>
</dbReference>
<dbReference type="PROSITE" id="PS50048">
    <property type="entry name" value="ZN2_CY6_FUNGAL_2"/>
    <property type="match status" value="1"/>
</dbReference>
<evidence type="ECO:0000255" key="1">
    <source>
        <dbReference type="PROSITE-ProRule" id="PRU00227"/>
    </source>
</evidence>
<evidence type="ECO:0000256" key="2">
    <source>
        <dbReference type="SAM" id="MobiDB-lite"/>
    </source>
</evidence>
<evidence type="ECO:0000269" key="3">
    <source>
    </source>
</evidence>
<evidence type="ECO:0000269" key="4">
    <source>
    </source>
</evidence>
<evidence type="ECO:0000269" key="5">
    <source>
    </source>
</evidence>
<evidence type="ECO:0000269" key="6">
    <source>
    </source>
</evidence>
<evidence type="ECO:0000269" key="7">
    <source>
    </source>
</evidence>
<evidence type="ECO:0000269" key="8">
    <source>
    </source>
</evidence>
<evidence type="ECO:0000303" key="9">
    <source>
    </source>
</evidence>
<evidence type="ECO:0000303" key="10">
    <source>
    </source>
</evidence>
<comment type="function">
    <text evidence="6 8">Transcriptional regulator; part of the gene cluster that mediates the biosynthesis of the tetrahydroxanthone dimer secalonic acid D.</text>
</comment>
<comment type="subcellular location">
    <subcellularLocation>
        <location evidence="1">Nucleus</location>
    </subcellularLocation>
</comment>
<comment type="biotechnology">
    <text evidence="3 4 5 7">Secalonic acids show unprecedented anticancer activities against various human cancer cells and might be interesting for further derivatization, targeting diseases such as cancer.</text>
</comment>
<protein>
    <recommendedName>
        <fullName evidence="9">Transcriptional regulator AacuB</fullName>
    </recommendedName>
    <alternativeName>
        <fullName evidence="10">Secalonic acid biosynthesis cluster protein B</fullName>
    </alternativeName>
</protein>
<proteinExistence type="evidence at protein level"/>
<organism>
    <name type="scientific">Aspergillus aculeatus (strain ATCC 16872 / CBS 172.66 / WB 5094)</name>
    <dbReference type="NCBI Taxonomy" id="690307"/>
    <lineage>
        <taxon>Eukaryota</taxon>
        <taxon>Fungi</taxon>
        <taxon>Dikarya</taxon>
        <taxon>Ascomycota</taxon>
        <taxon>Pezizomycotina</taxon>
        <taxon>Eurotiomycetes</taxon>
        <taxon>Eurotiomycetidae</taxon>
        <taxon>Eurotiales</taxon>
        <taxon>Aspergillaceae</taxon>
        <taxon>Aspergillus</taxon>
        <taxon>Aspergillus subgen. Circumdati</taxon>
    </lineage>
</organism>
<feature type="chain" id="PRO_0000453505" description="Transcriptional regulator AacuB">
    <location>
        <begin position="1"/>
        <end position="734"/>
    </location>
</feature>
<feature type="DNA-binding region" description="Zn(2)-C6 fungal-type" evidence="1">
    <location>
        <begin position="26"/>
        <end position="52"/>
    </location>
</feature>
<feature type="region of interest" description="Disordered" evidence="2">
    <location>
        <begin position="86"/>
        <end position="122"/>
    </location>
</feature>
<feature type="compositionally biased region" description="Basic and acidic residues" evidence="2">
    <location>
        <begin position="86"/>
        <end position="107"/>
    </location>
</feature>
<keyword id="KW-0238">DNA-binding</keyword>
<keyword id="KW-0479">Metal-binding</keyword>
<keyword id="KW-0539">Nucleus</keyword>
<keyword id="KW-1185">Reference proteome</keyword>
<keyword id="KW-0804">Transcription</keyword>
<keyword id="KW-0805">Transcription regulation</keyword>
<keyword id="KW-0862">Zinc</keyword>
<sequence>MDTPISASNQTATVVKPQQPRRVLACVLCQQRKIKCDRTFPCTNCVRAHVQCEQATRQRRRRFPEKELLTRLRLYESLLQQHNIKFDPLHTPTADHRSASDDGRDDLPEGAESEGTFGEREKPAVKTKSLYEFGSCINSLISGRLILVNRGDDDGNNGEDDEHDTGFLHDTDDVRPAVIQKAWNHTFQGQNNDHLLFGSPVGTVNLSASHPSHVHIFRLWQVYLDNVNPLLKVTHTPTLQTRIIDAASDITNISPTLEALMFSIYCVSLLSLSDEQCRALFGSAKKELSTGYQFACQQALRSCSILRSSDRESLTALYLYLVSIRPDTDPASLSSLLSVAIRIAQRIGIHNESTYGKCSALETEMRHRLWWSLIIFDNRICEMSDDKTASLAPTWDCKVPLNVNDFELQPEMKTPPAPNNRPTEMLFAVVRSELADFVRHSAFHLNFTNPSLNTIATRLTDETAQLVSLERALEEKYLAFCNPENALHFMTLWTMRGSLAKSRLLQHYSQCSNTSVPPTDAQRNTGIAHALRMLECDTELMTSPLTQGYRWLVHFHFPFPAYIHLLQDLKKRPVEAHADRAWEAMSDNYAVRMMDASQDDRPFFIVFSRIVLQAWEAREKMAVAAQLETPPPVPPRMVVDIRDKVMQMTASFGMDAAAAVESGGVVGVKAGDLDMPMQMDFAAPEMAYGAGGHGATGLEPWGCLDMAGPAAGDVGANQFLLNTMEWNALHARDR</sequence>
<reference key="1">
    <citation type="journal article" date="2017" name="Genome Biol.">
        <title>Comparative genomics reveals high biological diversity and specific adaptations in the industrially and medically important fungal genus Aspergillus.</title>
        <authorList>
            <person name="de Vries R.P."/>
            <person name="Riley R."/>
            <person name="Wiebenga A."/>
            <person name="Aguilar-Osorio G."/>
            <person name="Amillis S."/>
            <person name="Uchima C.A."/>
            <person name="Anderluh G."/>
            <person name="Asadollahi M."/>
            <person name="Askin M."/>
            <person name="Barry K."/>
            <person name="Battaglia E."/>
            <person name="Bayram O."/>
            <person name="Benocci T."/>
            <person name="Braus-Stromeyer S.A."/>
            <person name="Caldana C."/>
            <person name="Canovas D."/>
            <person name="Cerqueira G.C."/>
            <person name="Chen F."/>
            <person name="Chen W."/>
            <person name="Choi C."/>
            <person name="Clum A."/>
            <person name="Dos Santos R.A."/>
            <person name="Damasio A.R."/>
            <person name="Diallinas G."/>
            <person name="Emri T."/>
            <person name="Fekete E."/>
            <person name="Flipphi M."/>
            <person name="Freyberg S."/>
            <person name="Gallo A."/>
            <person name="Gournas C."/>
            <person name="Habgood R."/>
            <person name="Hainaut M."/>
            <person name="Harispe M.L."/>
            <person name="Henrissat B."/>
            <person name="Hilden K.S."/>
            <person name="Hope R."/>
            <person name="Hossain A."/>
            <person name="Karabika E."/>
            <person name="Karaffa L."/>
            <person name="Karanyi Z."/>
            <person name="Krasevec N."/>
            <person name="Kuo A."/>
            <person name="Kusch H."/>
            <person name="LaButti K."/>
            <person name="Lagendijk E.L."/>
            <person name="Lapidus A."/>
            <person name="Levasseur A."/>
            <person name="Lindquist E."/>
            <person name="Lipzen A."/>
            <person name="Logrieco A.F."/>
            <person name="MacCabe A."/>
            <person name="Maekelae M.R."/>
            <person name="Malavazi I."/>
            <person name="Melin P."/>
            <person name="Meyer V."/>
            <person name="Mielnichuk N."/>
            <person name="Miskei M."/>
            <person name="Molnar A.P."/>
            <person name="Mule G."/>
            <person name="Ngan C.Y."/>
            <person name="Orejas M."/>
            <person name="Orosz E."/>
            <person name="Ouedraogo J.P."/>
            <person name="Overkamp K.M."/>
            <person name="Park H.-S."/>
            <person name="Perrone G."/>
            <person name="Piumi F."/>
            <person name="Punt P.J."/>
            <person name="Ram A.F."/>
            <person name="Ramon A."/>
            <person name="Rauscher S."/>
            <person name="Record E."/>
            <person name="Riano-Pachon D.M."/>
            <person name="Robert V."/>
            <person name="Roehrig J."/>
            <person name="Ruller R."/>
            <person name="Salamov A."/>
            <person name="Salih N.S."/>
            <person name="Samson R.A."/>
            <person name="Sandor E."/>
            <person name="Sanguinetti M."/>
            <person name="Schuetze T."/>
            <person name="Sepcic K."/>
            <person name="Shelest E."/>
            <person name="Sherlock G."/>
            <person name="Sophianopoulou V."/>
            <person name="Squina F.M."/>
            <person name="Sun H."/>
            <person name="Susca A."/>
            <person name="Todd R.B."/>
            <person name="Tsang A."/>
            <person name="Unkles S.E."/>
            <person name="van de Wiele N."/>
            <person name="van Rossen-Uffink D."/>
            <person name="Oliveira J.V."/>
            <person name="Vesth T.C."/>
            <person name="Visser J."/>
            <person name="Yu J.-H."/>
            <person name="Zhou M."/>
            <person name="Andersen M.R."/>
            <person name="Archer D.B."/>
            <person name="Baker S.E."/>
            <person name="Benoit I."/>
            <person name="Brakhage A.A."/>
            <person name="Braus G.H."/>
            <person name="Fischer R."/>
            <person name="Frisvad J.C."/>
            <person name="Goldman G.H."/>
            <person name="Houbraken J."/>
            <person name="Oakley B."/>
            <person name="Pocsi I."/>
            <person name="Scazzocchio C."/>
            <person name="Seiboth B."/>
            <person name="vanKuyk P.A."/>
            <person name="Wortman J."/>
            <person name="Dyer P.S."/>
            <person name="Grigoriev I.V."/>
        </authorList>
    </citation>
    <scope>NUCLEOTIDE SEQUENCE [LARGE SCALE GENOMIC DNA]</scope>
    <source>
        <strain>ATCC 16872 / CBS 172.66 / WB 5094</strain>
    </source>
</reference>
<reference key="2">
    <citation type="journal article" date="2017" name="Neoplasma">
        <title>Secalonic acid- F inhibited cell growth more effectively than 5-fluorouracil on hepatocellular carcinoma in vitro and in vivo.</title>
        <authorList>
            <person name="Gao X."/>
            <person name="Sun H.L."/>
            <person name="Liu D.S."/>
            <person name="Zhang J.R."/>
            <person name="Zhang J."/>
            <person name="Yan M.M."/>
            <person name="Pan X.H."/>
        </authorList>
    </citation>
    <scope>BIOTECHNOLOGY</scope>
</reference>
<reference key="3">
    <citation type="journal article" date="2018" name="Curr. Microbiol.">
        <title>Secondary Metabolites and Their Biological Activity from Aspergillus aculeatus KKU-CT2.</title>
        <authorList>
            <person name="Yodsing N."/>
            <person name="Lekphrom R."/>
            <person name="Sangsopha W."/>
            <person name="Aimi T."/>
            <person name="Boonlue S."/>
        </authorList>
    </citation>
    <scope>BIOTECHNOLOGY</scope>
</reference>
<reference key="4">
    <citation type="journal article" date="2019" name="Chem. Sci.">
        <title>Structure revision of cryptosporioptides and determination of the genetic basis for dimeric xanthone biosynthesis in fungi.</title>
        <authorList>
            <person name="Greco C."/>
            <person name="de Mattos-Shipley K."/>
            <person name="Bailey A.M."/>
            <person name="Mulholland N.P."/>
            <person name="Vincent J.L."/>
            <person name="Willis C.L."/>
            <person name="Cox R.J."/>
            <person name="Simpson T.J."/>
        </authorList>
    </citation>
    <scope>IDENTIFICATION</scope>
    <scope>FUNCTION</scope>
</reference>
<reference key="5">
    <citation type="journal article" date="2019" name="Molecules">
        <title>Secalonic Acid-F, a Novel Mycotoxin, Represses the Progression of Hepatocellular Carcinoma via MARCH1 Regulation of the PI3K/AKT/beta-catenin Signaling Pathway.</title>
        <authorList>
            <person name="Xie L."/>
            <person name="Li M."/>
            <person name="Liu D."/>
            <person name="Wang X."/>
            <person name="Wang P."/>
            <person name="Dai H."/>
            <person name="Yang W."/>
            <person name="Liu W."/>
            <person name="Hu X."/>
            <person name="Zhao M."/>
        </authorList>
    </citation>
    <scope>BIOTECHNOLOGY</scope>
</reference>
<reference key="6">
    <citation type="journal article" date="2020" name="ACS Omega">
        <title>Discovery of a Secalonic Acid Derivative from Aspergillus aculeatus, an Endophyte of Rosa damascena Mill., Triggers Apoptosis in MDA-MB-231 Triple Negative Breast Cancer Cells.</title>
        <authorList>
            <person name="Farooq S."/>
            <person name="Qayum A."/>
            <person name="Nalli Y."/>
            <person name="Lauro G."/>
            <person name="Chini M.G."/>
            <person name="Bifulco G."/>
            <person name="Chaubey A."/>
            <person name="Singh S.K."/>
            <person name="Riyaz-Ul-Hassan S."/>
            <person name="Ali A."/>
        </authorList>
    </citation>
    <scope>BIOTECHNOLOGY</scope>
</reference>
<reference key="7">
    <citation type="journal article" date="2021" name="J. Nat. Prod.">
        <title>Heterologous biosynthesis of tetrahydroxanthone dimers: determination of key factors for selective or divergent synthesis.</title>
        <authorList>
            <person name="Wei X."/>
            <person name="Chen X."/>
            <person name="Chen L."/>
            <person name="Yan D."/>
            <person name="Wang W.G."/>
            <person name="Matsuda Y."/>
        </authorList>
    </citation>
    <scope>FUNCTION</scope>
</reference>